<dbReference type="EC" id="2.3.1.-"/>
<dbReference type="EMBL" id="CU329671">
    <property type="protein sequence ID" value="CAA22197.1"/>
    <property type="molecule type" value="Genomic_DNA"/>
</dbReference>
<dbReference type="PIR" id="T39343">
    <property type="entry name" value="T39343"/>
</dbReference>
<dbReference type="RefSeq" id="NP_595143.1">
    <property type="nucleotide sequence ID" value="NM_001021051.2"/>
</dbReference>
<dbReference type="SMR" id="O94340"/>
<dbReference type="BioGRID" id="276360">
    <property type="interactions" value="3"/>
</dbReference>
<dbReference type="FunCoup" id="O94340">
    <property type="interactions" value="1"/>
</dbReference>
<dbReference type="STRING" id="284812.O94340"/>
<dbReference type="iPTMnet" id="O94340"/>
<dbReference type="PaxDb" id="4896-SPBC1271.07c.1"/>
<dbReference type="EnsemblFungi" id="SPBC1271.07c.1">
    <property type="protein sequence ID" value="SPBC1271.07c.1:pep"/>
    <property type="gene ID" value="SPBC1271.07c"/>
</dbReference>
<dbReference type="KEGG" id="spo:2539810"/>
<dbReference type="PomBase" id="SPBC1271.07c"/>
<dbReference type="VEuPathDB" id="FungiDB:SPBC1271.07c"/>
<dbReference type="eggNOG" id="KOG3139">
    <property type="taxonomic scope" value="Eukaryota"/>
</dbReference>
<dbReference type="HOGENOM" id="CLU_013985_11_0_1"/>
<dbReference type="InParanoid" id="O94340"/>
<dbReference type="OMA" id="GCCALRP"/>
<dbReference type="PhylomeDB" id="O94340"/>
<dbReference type="PRO" id="PR:O94340"/>
<dbReference type="Proteomes" id="UP000002485">
    <property type="component" value="Chromosome II"/>
</dbReference>
<dbReference type="GO" id="GO:0005829">
    <property type="term" value="C:cytosol"/>
    <property type="evidence" value="ECO:0007005"/>
    <property type="project" value="PomBase"/>
</dbReference>
<dbReference type="GO" id="GO:0005634">
    <property type="term" value="C:nucleus"/>
    <property type="evidence" value="ECO:0007005"/>
    <property type="project" value="PomBase"/>
</dbReference>
<dbReference type="GO" id="GO:0008080">
    <property type="term" value="F:N-acetyltransferase activity"/>
    <property type="evidence" value="ECO:0000255"/>
    <property type="project" value="PomBase"/>
</dbReference>
<dbReference type="CDD" id="cd04301">
    <property type="entry name" value="NAT_SF"/>
    <property type="match status" value="1"/>
</dbReference>
<dbReference type="Gene3D" id="3.40.630.30">
    <property type="match status" value="1"/>
</dbReference>
<dbReference type="InterPro" id="IPR052777">
    <property type="entry name" value="Acetyltransferase_Enz"/>
</dbReference>
<dbReference type="InterPro" id="IPR016181">
    <property type="entry name" value="Acyl_CoA_acyltransferase"/>
</dbReference>
<dbReference type="InterPro" id="IPR000182">
    <property type="entry name" value="GNAT_dom"/>
</dbReference>
<dbReference type="PANTHER" id="PTHR43305">
    <property type="entry name" value="FAMILY N-ACETYLTRANSFERASE, PUTATIVE (AFU_ORTHOLOGUE AFUA_2G01380)-RELATED"/>
    <property type="match status" value="1"/>
</dbReference>
<dbReference type="PANTHER" id="PTHR43305:SF1">
    <property type="entry name" value="FAMILY N-ACETYLTRANSFERASE, PUTATIVE (AFU_ORTHOLOGUE AFUA_2G01380)-RELATED"/>
    <property type="match status" value="1"/>
</dbReference>
<dbReference type="Pfam" id="PF00583">
    <property type="entry name" value="Acetyltransf_1"/>
    <property type="match status" value="1"/>
</dbReference>
<dbReference type="SUPFAM" id="SSF55729">
    <property type="entry name" value="Acyl-CoA N-acyltransferases (Nat)"/>
    <property type="match status" value="1"/>
</dbReference>
<dbReference type="PROSITE" id="PS51186">
    <property type="entry name" value="GNAT"/>
    <property type="match status" value="1"/>
</dbReference>
<accession>O94340</accession>
<name>YHM7_SCHPO</name>
<organism>
    <name type="scientific">Schizosaccharomyces pombe (strain 972 / ATCC 24843)</name>
    <name type="common">Fission yeast</name>
    <dbReference type="NCBI Taxonomy" id="284812"/>
    <lineage>
        <taxon>Eukaryota</taxon>
        <taxon>Fungi</taxon>
        <taxon>Dikarya</taxon>
        <taxon>Ascomycota</taxon>
        <taxon>Taphrinomycotina</taxon>
        <taxon>Schizosaccharomycetes</taxon>
        <taxon>Schizosaccharomycetales</taxon>
        <taxon>Schizosaccharomycetaceae</taxon>
        <taxon>Schizosaccharomyces</taxon>
    </lineage>
</organism>
<reference key="1">
    <citation type="journal article" date="2002" name="Nature">
        <title>The genome sequence of Schizosaccharomyces pombe.</title>
        <authorList>
            <person name="Wood V."/>
            <person name="Gwilliam R."/>
            <person name="Rajandream M.A."/>
            <person name="Lyne M.H."/>
            <person name="Lyne R."/>
            <person name="Stewart A."/>
            <person name="Sgouros J.G."/>
            <person name="Peat N."/>
            <person name="Hayles J."/>
            <person name="Baker S.G."/>
            <person name="Basham D."/>
            <person name="Bowman S."/>
            <person name="Brooks K."/>
            <person name="Brown D."/>
            <person name="Brown S."/>
            <person name="Chillingworth T."/>
            <person name="Churcher C.M."/>
            <person name="Collins M."/>
            <person name="Connor R."/>
            <person name="Cronin A."/>
            <person name="Davis P."/>
            <person name="Feltwell T."/>
            <person name="Fraser A."/>
            <person name="Gentles S."/>
            <person name="Goble A."/>
            <person name="Hamlin N."/>
            <person name="Harris D.E."/>
            <person name="Hidalgo J."/>
            <person name="Hodgson G."/>
            <person name="Holroyd S."/>
            <person name="Hornsby T."/>
            <person name="Howarth S."/>
            <person name="Huckle E.J."/>
            <person name="Hunt S."/>
            <person name="Jagels K."/>
            <person name="James K.D."/>
            <person name="Jones L."/>
            <person name="Jones M."/>
            <person name="Leather S."/>
            <person name="McDonald S."/>
            <person name="McLean J."/>
            <person name="Mooney P."/>
            <person name="Moule S."/>
            <person name="Mungall K.L."/>
            <person name="Murphy L.D."/>
            <person name="Niblett D."/>
            <person name="Odell C."/>
            <person name="Oliver K."/>
            <person name="O'Neil S."/>
            <person name="Pearson D."/>
            <person name="Quail M.A."/>
            <person name="Rabbinowitsch E."/>
            <person name="Rutherford K.M."/>
            <person name="Rutter S."/>
            <person name="Saunders D."/>
            <person name="Seeger K."/>
            <person name="Sharp S."/>
            <person name="Skelton J."/>
            <person name="Simmonds M.N."/>
            <person name="Squares R."/>
            <person name="Squares S."/>
            <person name="Stevens K."/>
            <person name="Taylor K."/>
            <person name="Taylor R.G."/>
            <person name="Tivey A."/>
            <person name="Walsh S.V."/>
            <person name="Warren T."/>
            <person name="Whitehead S."/>
            <person name="Woodward J.R."/>
            <person name="Volckaert G."/>
            <person name="Aert R."/>
            <person name="Robben J."/>
            <person name="Grymonprez B."/>
            <person name="Weltjens I."/>
            <person name="Vanstreels E."/>
            <person name="Rieger M."/>
            <person name="Schaefer M."/>
            <person name="Mueller-Auer S."/>
            <person name="Gabel C."/>
            <person name="Fuchs M."/>
            <person name="Duesterhoeft A."/>
            <person name="Fritzc C."/>
            <person name="Holzer E."/>
            <person name="Moestl D."/>
            <person name="Hilbert H."/>
            <person name="Borzym K."/>
            <person name="Langer I."/>
            <person name="Beck A."/>
            <person name="Lehrach H."/>
            <person name="Reinhardt R."/>
            <person name="Pohl T.M."/>
            <person name="Eger P."/>
            <person name="Zimmermann W."/>
            <person name="Wedler H."/>
            <person name="Wambutt R."/>
            <person name="Purnelle B."/>
            <person name="Goffeau A."/>
            <person name="Cadieu E."/>
            <person name="Dreano S."/>
            <person name="Gloux S."/>
            <person name="Lelaure V."/>
            <person name="Mottier S."/>
            <person name="Galibert F."/>
            <person name="Aves S.J."/>
            <person name="Xiang Z."/>
            <person name="Hunt C."/>
            <person name="Moore K."/>
            <person name="Hurst S.M."/>
            <person name="Lucas M."/>
            <person name="Rochet M."/>
            <person name="Gaillardin C."/>
            <person name="Tallada V.A."/>
            <person name="Garzon A."/>
            <person name="Thode G."/>
            <person name="Daga R.R."/>
            <person name="Cruzado L."/>
            <person name="Jimenez J."/>
            <person name="Sanchez M."/>
            <person name="del Rey F."/>
            <person name="Benito J."/>
            <person name="Dominguez A."/>
            <person name="Revuelta J.L."/>
            <person name="Moreno S."/>
            <person name="Armstrong J."/>
            <person name="Forsburg S.L."/>
            <person name="Cerutti L."/>
            <person name="Lowe T."/>
            <person name="McCombie W.R."/>
            <person name="Paulsen I."/>
            <person name="Potashkin J."/>
            <person name="Shpakovski G.V."/>
            <person name="Ussery D."/>
            <person name="Barrell B.G."/>
            <person name="Nurse P."/>
        </authorList>
    </citation>
    <scope>NUCLEOTIDE SEQUENCE [LARGE SCALE GENOMIC DNA]</scope>
    <source>
        <strain>972 / ATCC 24843</strain>
    </source>
</reference>
<reference key="2">
    <citation type="journal article" date="2006" name="Nat. Biotechnol.">
        <title>ORFeome cloning and global analysis of protein localization in the fission yeast Schizosaccharomyces pombe.</title>
        <authorList>
            <person name="Matsuyama A."/>
            <person name="Arai R."/>
            <person name="Yashiroda Y."/>
            <person name="Shirai A."/>
            <person name="Kamata A."/>
            <person name="Sekido S."/>
            <person name="Kobayashi Y."/>
            <person name="Hashimoto A."/>
            <person name="Hamamoto M."/>
            <person name="Hiraoka Y."/>
            <person name="Horinouchi S."/>
            <person name="Yoshida M."/>
        </authorList>
    </citation>
    <scope>SUBCELLULAR LOCATION [LARGE SCALE ANALYSIS]</scope>
</reference>
<gene>
    <name type="ORF">SPBC1271.07c</name>
</gene>
<sequence length="163" mass="18479">MMKPSNISISAVKLPQDLDDFKMLVQEYLQEFGMDLTFQNVDDELANPMRKYGPPHGIMLVARDEHGTALGCVAVHPFGGPGCCEMKRLYVRPESRGLKLGVLLVKEIIQYSEKLGYSSMVLDTLDTLLPAVRLYKSFGFKTTEPYYHNPIPNVVYMRLEMSK</sequence>
<keyword id="KW-0012">Acyltransferase</keyword>
<keyword id="KW-0963">Cytoplasm</keyword>
<keyword id="KW-0539">Nucleus</keyword>
<keyword id="KW-1185">Reference proteome</keyword>
<keyword id="KW-0808">Transferase</keyword>
<protein>
    <recommendedName>
        <fullName>Uncharacterized N-acetyltransferase C1271.07c</fullName>
        <ecNumber>2.3.1.-</ecNumber>
    </recommendedName>
</protein>
<evidence type="ECO:0000255" key="1">
    <source>
        <dbReference type="PROSITE-ProRule" id="PRU00532"/>
    </source>
</evidence>
<evidence type="ECO:0000269" key="2">
    <source>
    </source>
</evidence>
<evidence type="ECO:0000305" key="3"/>
<comment type="subcellular location">
    <subcellularLocation>
        <location evidence="2">Cytoplasm</location>
    </subcellularLocation>
    <subcellularLocation>
        <location evidence="2">Nucleus</location>
    </subcellularLocation>
</comment>
<comment type="similarity">
    <text evidence="3">Belongs to the acetyltransferase family.</text>
</comment>
<proteinExistence type="inferred from homology"/>
<feature type="chain" id="PRO_0000310298" description="Uncharacterized N-acetyltransferase C1271.07c">
    <location>
        <begin position="1"/>
        <end position="163"/>
    </location>
</feature>
<feature type="domain" description="N-acetyltransferase" evidence="1">
    <location>
        <begin position="7"/>
        <end position="162"/>
    </location>
</feature>